<dbReference type="EC" id="5.1.1.1" evidence="1"/>
<dbReference type="EMBL" id="U70872">
    <property type="protein sequence ID" value="AAC45589.1"/>
    <property type="molecule type" value="Genomic_DNA"/>
</dbReference>
<dbReference type="RefSeq" id="WP_011727747.1">
    <property type="nucleotide sequence ID" value="NZ_UGQO01000001.1"/>
</dbReference>
<dbReference type="SMR" id="P94967"/>
<dbReference type="GeneID" id="93456414"/>
<dbReference type="OMA" id="HMTHFSD"/>
<dbReference type="UniPathway" id="UPA00042">
    <property type="reaction ID" value="UER00497"/>
</dbReference>
<dbReference type="GO" id="GO:0005829">
    <property type="term" value="C:cytosol"/>
    <property type="evidence" value="ECO:0007669"/>
    <property type="project" value="TreeGrafter"/>
</dbReference>
<dbReference type="GO" id="GO:0008784">
    <property type="term" value="F:alanine racemase activity"/>
    <property type="evidence" value="ECO:0007669"/>
    <property type="project" value="UniProtKB-UniRule"/>
</dbReference>
<dbReference type="GO" id="GO:0030170">
    <property type="term" value="F:pyridoxal phosphate binding"/>
    <property type="evidence" value="ECO:0007669"/>
    <property type="project" value="UniProtKB-UniRule"/>
</dbReference>
<dbReference type="GO" id="GO:0030632">
    <property type="term" value="P:D-alanine biosynthetic process"/>
    <property type="evidence" value="ECO:0007669"/>
    <property type="project" value="UniProtKB-UniRule"/>
</dbReference>
<dbReference type="GO" id="GO:0009252">
    <property type="term" value="P:peptidoglycan biosynthetic process"/>
    <property type="evidence" value="ECO:0007669"/>
    <property type="project" value="TreeGrafter"/>
</dbReference>
<dbReference type="GO" id="GO:0046677">
    <property type="term" value="P:response to antibiotic"/>
    <property type="evidence" value="ECO:0007669"/>
    <property type="project" value="UniProtKB-KW"/>
</dbReference>
<dbReference type="CDD" id="cd00430">
    <property type="entry name" value="PLPDE_III_AR"/>
    <property type="match status" value="1"/>
</dbReference>
<dbReference type="FunFam" id="2.40.37.10:FF:000015">
    <property type="entry name" value="Alanine racemase"/>
    <property type="match status" value="1"/>
</dbReference>
<dbReference type="FunFam" id="3.20.20.10:FF:000002">
    <property type="entry name" value="Alanine racemase"/>
    <property type="match status" value="1"/>
</dbReference>
<dbReference type="Gene3D" id="3.20.20.10">
    <property type="entry name" value="Alanine racemase"/>
    <property type="match status" value="1"/>
</dbReference>
<dbReference type="Gene3D" id="2.40.37.10">
    <property type="entry name" value="Lyase, Ornithine Decarboxylase, Chain A, domain 1"/>
    <property type="match status" value="1"/>
</dbReference>
<dbReference type="HAMAP" id="MF_01201">
    <property type="entry name" value="Ala_racemase"/>
    <property type="match status" value="1"/>
</dbReference>
<dbReference type="InterPro" id="IPR000821">
    <property type="entry name" value="Ala_racemase"/>
</dbReference>
<dbReference type="InterPro" id="IPR009006">
    <property type="entry name" value="Ala_racemase/Decarboxylase_C"/>
</dbReference>
<dbReference type="InterPro" id="IPR011079">
    <property type="entry name" value="Ala_racemase_C"/>
</dbReference>
<dbReference type="InterPro" id="IPR001608">
    <property type="entry name" value="Ala_racemase_N"/>
</dbReference>
<dbReference type="InterPro" id="IPR020622">
    <property type="entry name" value="Ala_racemase_pyridoxalP-BS"/>
</dbReference>
<dbReference type="InterPro" id="IPR029066">
    <property type="entry name" value="PLP-binding_barrel"/>
</dbReference>
<dbReference type="NCBIfam" id="TIGR00492">
    <property type="entry name" value="alr"/>
    <property type="match status" value="1"/>
</dbReference>
<dbReference type="PANTHER" id="PTHR30511">
    <property type="entry name" value="ALANINE RACEMASE"/>
    <property type="match status" value="1"/>
</dbReference>
<dbReference type="PANTHER" id="PTHR30511:SF0">
    <property type="entry name" value="ALANINE RACEMASE, CATABOLIC-RELATED"/>
    <property type="match status" value="1"/>
</dbReference>
<dbReference type="Pfam" id="PF00842">
    <property type="entry name" value="Ala_racemase_C"/>
    <property type="match status" value="1"/>
</dbReference>
<dbReference type="Pfam" id="PF01168">
    <property type="entry name" value="Ala_racemase_N"/>
    <property type="match status" value="1"/>
</dbReference>
<dbReference type="PRINTS" id="PR00992">
    <property type="entry name" value="ALARACEMASE"/>
</dbReference>
<dbReference type="SMART" id="SM01005">
    <property type="entry name" value="Ala_racemase_C"/>
    <property type="match status" value="1"/>
</dbReference>
<dbReference type="SUPFAM" id="SSF50621">
    <property type="entry name" value="Alanine racemase C-terminal domain-like"/>
    <property type="match status" value="1"/>
</dbReference>
<dbReference type="SUPFAM" id="SSF51419">
    <property type="entry name" value="PLP-binding barrel"/>
    <property type="match status" value="1"/>
</dbReference>
<dbReference type="PROSITE" id="PS00395">
    <property type="entry name" value="ALANINE_RACEMASE"/>
    <property type="match status" value="1"/>
</dbReference>
<accession>P94967</accession>
<gene>
    <name type="primary">alr</name>
    <name type="synonym">alrA</name>
</gene>
<proteinExistence type="inferred from homology"/>
<reference key="1">
    <citation type="journal article" date="1997" name="J. Bacteriol.">
        <title>Overexpression of the D-alanine racemase gene confers resistance to D-cycloserine in Mycobacterium smegmatis.</title>
        <authorList>
            <person name="Caceres N.E."/>
            <person name="Harris N.B."/>
            <person name="Wellehan J.F."/>
            <person name="Feng Z."/>
            <person name="Kapur V."/>
            <person name="Barletta R.G."/>
        </authorList>
    </citation>
    <scope>NUCLEOTIDE SEQUENCE [GENOMIC DNA]</scope>
    <scope>FUNCTION</scope>
</reference>
<evidence type="ECO:0000255" key="1">
    <source>
        <dbReference type="HAMAP-Rule" id="MF_01201"/>
    </source>
</evidence>
<evidence type="ECO:0000269" key="2">
    <source>
    </source>
</evidence>
<feature type="chain" id="PRO_0000114538" description="Alanine racemase">
    <location>
        <begin position="1"/>
        <end position="389"/>
    </location>
</feature>
<feature type="active site" description="Proton acceptor; specific for D-alanine" evidence="1">
    <location>
        <position position="46"/>
    </location>
</feature>
<feature type="active site" description="Proton acceptor; specific for L-alanine" evidence="1">
    <location>
        <position position="275"/>
    </location>
</feature>
<feature type="binding site" evidence="1">
    <location>
        <position position="144"/>
    </location>
    <ligand>
        <name>substrate</name>
    </ligand>
</feature>
<feature type="binding site" evidence="1">
    <location>
        <position position="323"/>
    </location>
    <ligand>
        <name>substrate</name>
    </ligand>
</feature>
<feature type="modified residue" description="N6-(pyridoxal phosphate)lysine" evidence="1">
    <location>
        <position position="46"/>
    </location>
</feature>
<protein>
    <recommendedName>
        <fullName evidence="1">Alanine racemase</fullName>
        <ecNumber evidence="1">5.1.1.1</ecNumber>
    </recommendedName>
</protein>
<organism>
    <name type="scientific">Mycolicibacterium smegmatis</name>
    <name type="common">Mycobacterium smegmatis</name>
    <dbReference type="NCBI Taxonomy" id="1772"/>
    <lineage>
        <taxon>Bacteria</taxon>
        <taxon>Bacillati</taxon>
        <taxon>Actinomycetota</taxon>
        <taxon>Actinomycetes</taxon>
        <taxon>Mycobacteriales</taxon>
        <taxon>Mycobacteriaceae</taxon>
        <taxon>Mycolicibacterium</taxon>
    </lineage>
</organism>
<name>ALR_MYCSM</name>
<sequence>MQTTEPMTPPAPLASAQTVIDLGAIDHNVRVLRELAGSADVMAVVKADAYGHGALPVARTALAAGAAALGVATIPEALALREGGITAPVLAWLHPPGTDFAPAIAADVEVAVSSRRQLEQVTAAAAEVGRTATVTVKVDTGLSRNGVGAADYPEVLDVLRRAQADGAIRVRGLMSHLVHGDDPENPFNGLQGQRLADMRVYAREHGVDYEVAHLCNSPAAMTRPDLAFEMVRPGISLYGLSPIPERGDMGLRPAMTLKCPVALVRSVHAGDGVSYGHRWVADRDTTLGLLPIGYADGVYRALSGRIDVLIKGRRRRAVGRICMDQFVVDLGPDADDVAVGDDAILFGPGANGEPTAQDWAELLDTIHYEVVTSPRGRVTRTYLPAGQQD</sequence>
<keyword id="KW-0046">Antibiotic resistance</keyword>
<keyword id="KW-0413">Isomerase</keyword>
<keyword id="KW-0663">Pyridoxal phosphate</keyword>
<comment type="function">
    <text evidence="2">Catalyzes the interconversion of L-alanine and D-alanine. Overexpression due to a natural mutation in the promoter is responsible for mediating resistance to D-cycloserine (DCS) in mycobacteria.</text>
</comment>
<comment type="catalytic activity">
    <reaction evidence="1">
        <text>L-alanine = D-alanine</text>
        <dbReference type="Rhea" id="RHEA:20249"/>
        <dbReference type="ChEBI" id="CHEBI:57416"/>
        <dbReference type="ChEBI" id="CHEBI:57972"/>
        <dbReference type="EC" id="5.1.1.1"/>
    </reaction>
</comment>
<comment type="cofactor">
    <cofactor evidence="1">
        <name>pyridoxal 5'-phosphate</name>
        <dbReference type="ChEBI" id="CHEBI:597326"/>
    </cofactor>
</comment>
<comment type="pathway">
    <text evidence="1">Amino-acid biosynthesis; D-alanine biosynthesis; D-alanine from L-alanine: step 1/1.</text>
</comment>
<comment type="similarity">
    <text evidence="1">Belongs to the alanine racemase family.</text>
</comment>